<comment type="function">
    <text evidence="1">Catalyzes the condensation of ATP and 5-phosphoribose 1-diphosphate to form N'-(5'-phosphoribosyl)-ATP (PR-ATP). Has a crucial role in the pathway because the rate of histidine biosynthesis seems to be controlled primarily by regulation of HisG enzymatic activity.</text>
</comment>
<comment type="catalytic activity">
    <reaction evidence="1">
        <text>1-(5-phospho-beta-D-ribosyl)-ATP + diphosphate = 5-phospho-alpha-D-ribose 1-diphosphate + ATP</text>
        <dbReference type="Rhea" id="RHEA:18473"/>
        <dbReference type="ChEBI" id="CHEBI:30616"/>
        <dbReference type="ChEBI" id="CHEBI:33019"/>
        <dbReference type="ChEBI" id="CHEBI:58017"/>
        <dbReference type="ChEBI" id="CHEBI:73183"/>
        <dbReference type="EC" id="2.4.2.17"/>
    </reaction>
</comment>
<comment type="pathway">
    <text evidence="1">Amino-acid biosynthesis; L-histidine biosynthesis; L-histidine from 5-phospho-alpha-D-ribose 1-diphosphate: step 1/9.</text>
</comment>
<comment type="subunit">
    <text evidence="1">Heteromultimer composed of HisG and HisZ subunits.</text>
</comment>
<comment type="subcellular location">
    <subcellularLocation>
        <location evidence="1">Cytoplasm</location>
    </subcellularLocation>
</comment>
<comment type="domain">
    <text>Lacks the C-terminal regulatory region which is replaced by HisZ.</text>
</comment>
<comment type="similarity">
    <text evidence="1">Belongs to the ATP phosphoribosyltransferase family. Short subfamily.</text>
</comment>
<keyword id="KW-0028">Amino-acid biosynthesis</keyword>
<keyword id="KW-0067">ATP-binding</keyword>
<keyword id="KW-0963">Cytoplasm</keyword>
<keyword id="KW-0328">Glycosyltransferase</keyword>
<keyword id="KW-0368">Histidine biosynthesis</keyword>
<keyword id="KW-0547">Nucleotide-binding</keyword>
<keyword id="KW-1185">Reference proteome</keyword>
<keyword id="KW-0808">Transferase</keyword>
<proteinExistence type="inferred from homology"/>
<name>HIS1_LACPL</name>
<protein>
    <recommendedName>
        <fullName evidence="1">ATP phosphoribosyltransferase</fullName>
        <shortName evidence="1">ATP-PRT</shortName>
        <shortName evidence="1">ATP-PRTase</shortName>
        <ecNumber evidence="1">2.4.2.17</ecNumber>
    </recommendedName>
</protein>
<sequence length="218" mass="24385">MTEPRLKIALTKGRVEQQVLPLLEEAGLDCSQVRNKQRRLIFDSETQPYEFILAKGPDVTTFLERGAADIGIVGSDILTEHESTQYELLDLGVGKCQFVLASTADFDPVAPRRKIIGTKYPLITQRYFDRLGQDVEIIKIEGSVELAPLTGLADAIVDITETGTTIRENHLQIYDYLQPVSTRLVVNRLALKQQQAAIFDLVDRLATVVDTNNPKEFV</sequence>
<evidence type="ECO:0000255" key="1">
    <source>
        <dbReference type="HAMAP-Rule" id="MF_01018"/>
    </source>
</evidence>
<organism>
    <name type="scientific">Lactiplantibacillus plantarum (strain ATCC BAA-793 / NCIMB 8826 / WCFS1)</name>
    <name type="common">Lactobacillus plantarum</name>
    <dbReference type="NCBI Taxonomy" id="220668"/>
    <lineage>
        <taxon>Bacteria</taxon>
        <taxon>Bacillati</taxon>
        <taxon>Bacillota</taxon>
        <taxon>Bacilli</taxon>
        <taxon>Lactobacillales</taxon>
        <taxon>Lactobacillaceae</taxon>
        <taxon>Lactiplantibacillus</taxon>
    </lineage>
</organism>
<gene>
    <name evidence="1" type="primary">hisG</name>
    <name type="ordered locus">lp_2560</name>
</gene>
<accession>Q88UD9</accession>
<accession>F9UR76</accession>
<reference key="1">
    <citation type="journal article" date="2003" name="Proc. Natl. Acad. Sci. U.S.A.">
        <title>Complete genome sequence of Lactobacillus plantarum WCFS1.</title>
        <authorList>
            <person name="Kleerebezem M."/>
            <person name="Boekhorst J."/>
            <person name="van Kranenburg R."/>
            <person name="Molenaar D."/>
            <person name="Kuipers O.P."/>
            <person name="Leer R."/>
            <person name="Tarchini R."/>
            <person name="Peters S.A."/>
            <person name="Sandbrink H.M."/>
            <person name="Fiers M.W.E.J."/>
            <person name="Stiekema W."/>
            <person name="Klein Lankhorst R.M."/>
            <person name="Bron P.A."/>
            <person name="Hoffer S.M."/>
            <person name="Nierop Groot M.N."/>
            <person name="Kerkhoven R."/>
            <person name="De Vries M."/>
            <person name="Ursing B."/>
            <person name="De Vos W.M."/>
            <person name="Siezen R.J."/>
        </authorList>
    </citation>
    <scope>NUCLEOTIDE SEQUENCE [LARGE SCALE GENOMIC DNA]</scope>
    <source>
        <strain>ATCC BAA-793 / NCIMB 8826 / WCFS1</strain>
    </source>
</reference>
<reference key="2">
    <citation type="journal article" date="2012" name="J. Bacteriol.">
        <title>Complete resequencing and reannotation of the Lactobacillus plantarum WCFS1 genome.</title>
        <authorList>
            <person name="Siezen R.J."/>
            <person name="Francke C."/>
            <person name="Renckens B."/>
            <person name="Boekhorst J."/>
            <person name="Wels M."/>
            <person name="Kleerebezem M."/>
            <person name="van Hijum S.A."/>
        </authorList>
    </citation>
    <scope>NUCLEOTIDE SEQUENCE [LARGE SCALE GENOMIC DNA]</scope>
    <scope>GENOME REANNOTATION</scope>
    <source>
        <strain>ATCC BAA-793 / NCIMB 8826 / WCFS1</strain>
    </source>
</reference>
<feature type="chain" id="PRO_0000151912" description="ATP phosphoribosyltransferase">
    <location>
        <begin position="1"/>
        <end position="218"/>
    </location>
</feature>
<dbReference type="EC" id="2.4.2.17" evidence="1"/>
<dbReference type="EMBL" id="AL935263">
    <property type="protein sequence ID" value="CCC79715.1"/>
    <property type="molecule type" value="Genomic_DNA"/>
</dbReference>
<dbReference type="RefSeq" id="WP_003642712.1">
    <property type="nucleotide sequence ID" value="NC_004567.2"/>
</dbReference>
<dbReference type="RefSeq" id="YP_004890229.1">
    <property type="nucleotide sequence ID" value="NC_004567.2"/>
</dbReference>
<dbReference type="SMR" id="Q88UD9"/>
<dbReference type="STRING" id="220668.lp_2560"/>
<dbReference type="EnsemblBacteria" id="CCC79715">
    <property type="protein sequence ID" value="CCC79715"/>
    <property type="gene ID" value="lp_2560"/>
</dbReference>
<dbReference type="GeneID" id="77215826"/>
<dbReference type="KEGG" id="lpl:lp_2560"/>
<dbReference type="PATRIC" id="fig|220668.9.peg.2151"/>
<dbReference type="eggNOG" id="COG0040">
    <property type="taxonomic scope" value="Bacteria"/>
</dbReference>
<dbReference type="HOGENOM" id="CLU_038115_2_0_9"/>
<dbReference type="OrthoDB" id="9801867at2"/>
<dbReference type="PhylomeDB" id="Q88UD9"/>
<dbReference type="UniPathway" id="UPA00031">
    <property type="reaction ID" value="UER00006"/>
</dbReference>
<dbReference type="Proteomes" id="UP000000432">
    <property type="component" value="Chromosome"/>
</dbReference>
<dbReference type="GO" id="GO:0005737">
    <property type="term" value="C:cytoplasm"/>
    <property type="evidence" value="ECO:0007669"/>
    <property type="project" value="UniProtKB-SubCell"/>
</dbReference>
<dbReference type="GO" id="GO:0005524">
    <property type="term" value="F:ATP binding"/>
    <property type="evidence" value="ECO:0007669"/>
    <property type="project" value="UniProtKB-KW"/>
</dbReference>
<dbReference type="GO" id="GO:0003879">
    <property type="term" value="F:ATP phosphoribosyltransferase activity"/>
    <property type="evidence" value="ECO:0007669"/>
    <property type="project" value="UniProtKB-UniRule"/>
</dbReference>
<dbReference type="GO" id="GO:0000105">
    <property type="term" value="P:L-histidine biosynthetic process"/>
    <property type="evidence" value="ECO:0007669"/>
    <property type="project" value="UniProtKB-UniRule"/>
</dbReference>
<dbReference type="CDD" id="cd13595">
    <property type="entry name" value="PBP2_HisGs"/>
    <property type="match status" value="1"/>
</dbReference>
<dbReference type="FunFam" id="3.40.190.10:FF:000008">
    <property type="entry name" value="ATP phosphoribosyltransferase"/>
    <property type="match status" value="1"/>
</dbReference>
<dbReference type="Gene3D" id="3.40.190.10">
    <property type="entry name" value="Periplasmic binding protein-like II"/>
    <property type="match status" value="2"/>
</dbReference>
<dbReference type="HAMAP" id="MF_01018">
    <property type="entry name" value="HisG_Short"/>
    <property type="match status" value="1"/>
</dbReference>
<dbReference type="InterPro" id="IPR013820">
    <property type="entry name" value="ATP_PRibTrfase_cat"/>
</dbReference>
<dbReference type="InterPro" id="IPR018198">
    <property type="entry name" value="ATP_PRibTrfase_CS"/>
</dbReference>
<dbReference type="InterPro" id="IPR001348">
    <property type="entry name" value="ATP_PRibTrfase_HisG"/>
</dbReference>
<dbReference type="InterPro" id="IPR024893">
    <property type="entry name" value="ATP_PRibTrfase_HisG_short"/>
</dbReference>
<dbReference type="NCBIfam" id="TIGR00070">
    <property type="entry name" value="hisG"/>
    <property type="match status" value="1"/>
</dbReference>
<dbReference type="PANTHER" id="PTHR21403:SF8">
    <property type="entry name" value="ATP PHOSPHORIBOSYLTRANSFERASE"/>
    <property type="match status" value="1"/>
</dbReference>
<dbReference type="PANTHER" id="PTHR21403">
    <property type="entry name" value="ATP PHOSPHORIBOSYLTRANSFERASE ATP-PRTASE"/>
    <property type="match status" value="1"/>
</dbReference>
<dbReference type="Pfam" id="PF01634">
    <property type="entry name" value="HisG"/>
    <property type="match status" value="1"/>
</dbReference>
<dbReference type="SUPFAM" id="SSF53850">
    <property type="entry name" value="Periplasmic binding protein-like II"/>
    <property type="match status" value="1"/>
</dbReference>
<dbReference type="PROSITE" id="PS01316">
    <property type="entry name" value="ATP_P_PHORIBOSYLTR"/>
    <property type="match status" value="1"/>
</dbReference>